<gene>
    <name evidence="1" type="primary">rpsJ</name>
    <name type="ordered locus">PLES_06641</name>
</gene>
<proteinExistence type="inferred from homology"/>
<accession>B7V643</accession>
<organism>
    <name type="scientific">Pseudomonas aeruginosa (strain LESB58)</name>
    <dbReference type="NCBI Taxonomy" id="557722"/>
    <lineage>
        <taxon>Bacteria</taxon>
        <taxon>Pseudomonadati</taxon>
        <taxon>Pseudomonadota</taxon>
        <taxon>Gammaproteobacteria</taxon>
        <taxon>Pseudomonadales</taxon>
        <taxon>Pseudomonadaceae</taxon>
        <taxon>Pseudomonas</taxon>
    </lineage>
</organism>
<feature type="chain" id="PRO_1000127168" description="Small ribosomal subunit protein uS10">
    <location>
        <begin position="1"/>
        <end position="103"/>
    </location>
</feature>
<reference key="1">
    <citation type="journal article" date="2009" name="Genome Res.">
        <title>Newly introduced genomic prophage islands are critical determinants of in vivo competitiveness in the Liverpool epidemic strain of Pseudomonas aeruginosa.</title>
        <authorList>
            <person name="Winstanley C."/>
            <person name="Langille M.G.I."/>
            <person name="Fothergill J.L."/>
            <person name="Kukavica-Ibrulj I."/>
            <person name="Paradis-Bleau C."/>
            <person name="Sanschagrin F."/>
            <person name="Thomson N.R."/>
            <person name="Winsor G.L."/>
            <person name="Quail M.A."/>
            <person name="Lennard N."/>
            <person name="Bignell A."/>
            <person name="Clarke L."/>
            <person name="Seeger K."/>
            <person name="Saunders D."/>
            <person name="Harris D."/>
            <person name="Parkhill J."/>
            <person name="Hancock R.E.W."/>
            <person name="Brinkman F.S.L."/>
            <person name="Levesque R.C."/>
        </authorList>
    </citation>
    <scope>NUCLEOTIDE SEQUENCE [LARGE SCALE GENOMIC DNA]</scope>
    <source>
        <strain>LESB58</strain>
    </source>
</reference>
<protein>
    <recommendedName>
        <fullName evidence="1">Small ribosomal subunit protein uS10</fullName>
    </recommendedName>
    <alternativeName>
        <fullName evidence="2">30S ribosomal protein S10</fullName>
    </alternativeName>
</protein>
<evidence type="ECO:0000255" key="1">
    <source>
        <dbReference type="HAMAP-Rule" id="MF_00508"/>
    </source>
</evidence>
<evidence type="ECO:0000305" key="2"/>
<name>RS10_PSEA8</name>
<sequence>MQNQQIRIRLKAFDHRLIDQSTQEIVETAKRTGAQVRGPIPLPTRKERFTVLISPHVNKDARDQYEIRTHKRVLDIVQPTDKTVDALMKLDLAAGVEVQISLG</sequence>
<keyword id="KW-0687">Ribonucleoprotein</keyword>
<keyword id="KW-0689">Ribosomal protein</keyword>
<comment type="function">
    <text evidence="1">Involved in the binding of tRNA to the ribosomes.</text>
</comment>
<comment type="subunit">
    <text evidence="1">Part of the 30S ribosomal subunit.</text>
</comment>
<comment type="similarity">
    <text evidence="1">Belongs to the universal ribosomal protein uS10 family.</text>
</comment>
<dbReference type="EMBL" id="FM209186">
    <property type="protein sequence ID" value="CAW25391.1"/>
    <property type="molecule type" value="Genomic_DNA"/>
</dbReference>
<dbReference type="RefSeq" id="WP_003103876.1">
    <property type="nucleotide sequence ID" value="NC_011770.1"/>
</dbReference>
<dbReference type="SMR" id="B7V643"/>
<dbReference type="GeneID" id="77261717"/>
<dbReference type="KEGG" id="pag:PLES_06641"/>
<dbReference type="HOGENOM" id="CLU_122625_1_3_6"/>
<dbReference type="GO" id="GO:1990904">
    <property type="term" value="C:ribonucleoprotein complex"/>
    <property type="evidence" value="ECO:0007669"/>
    <property type="project" value="UniProtKB-KW"/>
</dbReference>
<dbReference type="GO" id="GO:0005840">
    <property type="term" value="C:ribosome"/>
    <property type="evidence" value="ECO:0007669"/>
    <property type="project" value="UniProtKB-KW"/>
</dbReference>
<dbReference type="GO" id="GO:0003735">
    <property type="term" value="F:structural constituent of ribosome"/>
    <property type="evidence" value="ECO:0007669"/>
    <property type="project" value="InterPro"/>
</dbReference>
<dbReference type="GO" id="GO:0000049">
    <property type="term" value="F:tRNA binding"/>
    <property type="evidence" value="ECO:0007669"/>
    <property type="project" value="UniProtKB-UniRule"/>
</dbReference>
<dbReference type="GO" id="GO:0006412">
    <property type="term" value="P:translation"/>
    <property type="evidence" value="ECO:0007669"/>
    <property type="project" value="UniProtKB-UniRule"/>
</dbReference>
<dbReference type="FunFam" id="3.30.70.600:FF:000001">
    <property type="entry name" value="30S ribosomal protein S10"/>
    <property type="match status" value="1"/>
</dbReference>
<dbReference type="Gene3D" id="3.30.70.600">
    <property type="entry name" value="Ribosomal protein S10 domain"/>
    <property type="match status" value="1"/>
</dbReference>
<dbReference type="HAMAP" id="MF_00508">
    <property type="entry name" value="Ribosomal_uS10"/>
    <property type="match status" value="1"/>
</dbReference>
<dbReference type="InterPro" id="IPR001848">
    <property type="entry name" value="Ribosomal_uS10"/>
</dbReference>
<dbReference type="InterPro" id="IPR018268">
    <property type="entry name" value="Ribosomal_uS10_CS"/>
</dbReference>
<dbReference type="InterPro" id="IPR027486">
    <property type="entry name" value="Ribosomal_uS10_dom"/>
</dbReference>
<dbReference type="InterPro" id="IPR036838">
    <property type="entry name" value="Ribosomal_uS10_dom_sf"/>
</dbReference>
<dbReference type="NCBIfam" id="NF001861">
    <property type="entry name" value="PRK00596.1"/>
    <property type="match status" value="1"/>
</dbReference>
<dbReference type="NCBIfam" id="TIGR01049">
    <property type="entry name" value="rpsJ_bact"/>
    <property type="match status" value="1"/>
</dbReference>
<dbReference type="PANTHER" id="PTHR11700">
    <property type="entry name" value="30S RIBOSOMAL PROTEIN S10 FAMILY MEMBER"/>
    <property type="match status" value="1"/>
</dbReference>
<dbReference type="Pfam" id="PF00338">
    <property type="entry name" value="Ribosomal_S10"/>
    <property type="match status" value="1"/>
</dbReference>
<dbReference type="PRINTS" id="PR00971">
    <property type="entry name" value="RIBOSOMALS10"/>
</dbReference>
<dbReference type="SMART" id="SM01403">
    <property type="entry name" value="Ribosomal_S10"/>
    <property type="match status" value="1"/>
</dbReference>
<dbReference type="SUPFAM" id="SSF54999">
    <property type="entry name" value="Ribosomal protein S10"/>
    <property type="match status" value="1"/>
</dbReference>
<dbReference type="PROSITE" id="PS00361">
    <property type="entry name" value="RIBOSOMAL_S10"/>
    <property type="match status" value="1"/>
</dbReference>